<name>TAM_SINMW</name>
<sequence length="257" mass="28758">MAWSAAQYTKFEDERTRPARDLLAQVTELPDGPAFDLGCGPGNSTELILNRFRDNPLTGIDSDEDMLSAARTRLPELRFEKADLASWVPPAESALFFANAVFQWLPEHIVLFERLILALAPGGTLAVQMPDNLDEPTHVLMEETAEESAFASAFAGRAARRKSLPSPANYVERLTAKDVRIDVWHTVYYHQLANANAIVEWVKGTGLRPYLDALPAARRAGYLAAYADKIRKAYPTMKDGRVLLRFPRLFIVATRNR</sequence>
<proteinExistence type="inferred from homology"/>
<comment type="function">
    <text evidence="1">Catalyzes the S-adenosylmethionine monomethyl esterification of trans-aconitate.</text>
</comment>
<comment type="catalytic activity">
    <reaction evidence="1">
        <text>trans-aconitate + S-adenosyl-L-methionine = (E)-3-(methoxycarbonyl)pent-2-enedioate + S-adenosyl-L-homocysteine</text>
        <dbReference type="Rhea" id="RHEA:14969"/>
        <dbReference type="ChEBI" id="CHEBI:15708"/>
        <dbReference type="ChEBI" id="CHEBI:57470"/>
        <dbReference type="ChEBI" id="CHEBI:57856"/>
        <dbReference type="ChEBI" id="CHEBI:59789"/>
        <dbReference type="EC" id="2.1.1.144"/>
    </reaction>
</comment>
<comment type="subcellular location">
    <subcellularLocation>
        <location evidence="1">Cytoplasm</location>
    </subcellularLocation>
</comment>
<comment type="similarity">
    <text evidence="1">Belongs to the methyltransferase superfamily. Tam family.</text>
</comment>
<evidence type="ECO:0000255" key="1">
    <source>
        <dbReference type="HAMAP-Rule" id="MF_00560"/>
    </source>
</evidence>
<protein>
    <recommendedName>
        <fullName evidence="1">Trans-aconitate 2-methyltransferase</fullName>
        <ecNumber evidence="1">2.1.1.144</ecNumber>
    </recommendedName>
</protein>
<keyword id="KW-0963">Cytoplasm</keyword>
<keyword id="KW-0489">Methyltransferase</keyword>
<keyword id="KW-0949">S-adenosyl-L-methionine</keyword>
<keyword id="KW-0808">Transferase</keyword>
<dbReference type="EC" id="2.1.1.144" evidence="1"/>
<dbReference type="EMBL" id="CP000738">
    <property type="protein sequence ID" value="ABR59437.1"/>
    <property type="molecule type" value="Genomic_DNA"/>
</dbReference>
<dbReference type="RefSeq" id="WP_011974783.1">
    <property type="nucleotide sequence ID" value="NC_009636.1"/>
</dbReference>
<dbReference type="RefSeq" id="YP_001326272.1">
    <property type="nucleotide sequence ID" value="NC_009636.1"/>
</dbReference>
<dbReference type="SMR" id="A6U707"/>
<dbReference type="STRING" id="366394.Smed_0581"/>
<dbReference type="GeneID" id="61609857"/>
<dbReference type="KEGG" id="smd:Smed_0581"/>
<dbReference type="PATRIC" id="fig|366394.8.peg.3674"/>
<dbReference type="eggNOG" id="COG4106">
    <property type="taxonomic scope" value="Bacteria"/>
</dbReference>
<dbReference type="HOGENOM" id="CLU_037990_5_2_5"/>
<dbReference type="OrthoDB" id="9795085at2"/>
<dbReference type="Proteomes" id="UP000001108">
    <property type="component" value="Chromosome"/>
</dbReference>
<dbReference type="GO" id="GO:0005737">
    <property type="term" value="C:cytoplasm"/>
    <property type="evidence" value="ECO:0007669"/>
    <property type="project" value="UniProtKB-SubCell"/>
</dbReference>
<dbReference type="GO" id="GO:0030798">
    <property type="term" value="F:trans-aconitate 2-methyltransferase activity"/>
    <property type="evidence" value="ECO:0007669"/>
    <property type="project" value="UniProtKB-UniRule"/>
</dbReference>
<dbReference type="GO" id="GO:0032259">
    <property type="term" value="P:methylation"/>
    <property type="evidence" value="ECO:0007669"/>
    <property type="project" value="UniProtKB-KW"/>
</dbReference>
<dbReference type="CDD" id="cd02440">
    <property type="entry name" value="AdoMet_MTases"/>
    <property type="match status" value="1"/>
</dbReference>
<dbReference type="Gene3D" id="1.10.150.290">
    <property type="entry name" value="S-adenosyl-L-methionine-dependent methyltransferases"/>
    <property type="match status" value="1"/>
</dbReference>
<dbReference type="Gene3D" id="3.40.50.150">
    <property type="entry name" value="Vaccinia Virus protein VP39"/>
    <property type="match status" value="1"/>
</dbReference>
<dbReference type="HAMAP" id="MF_00560">
    <property type="entry name" value="Tran_acon_Me_trans"/>
    <property type="match status" value="1"/>
</dbReference>
<dbReference type="InterPro" id="IPR041698">
    <property type="entry name" value="Methyltransf_25"/>
</dbReference>
<dbReference type="InterPro" id="IPR029063">
    <property type="entry name" value="SAM-dependent_MTases_sf"/>
</dbReference>
<dbReference type="InterPro" id="IPR023506">
    <property type="entry name" value="Trans-aconitate_MeTrfase"/>
</dbReference>
<dbReference type="InterPro" id="IPR023149">
    <property type="entry name" value="Trans_acon_MeTrfase_C"/>
</dbReference>
<dbReference type="NCBIfam" id="NF002463">
    <property type="entry name" value="PRK01683.1"/>
    <property type="match status" value="1"/>
</dbReference>
<dbReference type="PANTHER" id="PTHR43861:SF1">
    <property type="entry name" value="TRANS-ACONITATE 2-METHYLTRANSFERASE"/>
    <property type="match status" value="1"/>
</dbReference>
<dbReference type="PANTHER" id="PTHR43861">
    <property type="entry name" value="TRANS-ACONITATE 2-METHYLTRANSFERASE-RELATED"/>
    <property type="match status" value="1"/>
</dbReference>
<dbReference type="Pfam" id="PF13649">
    <property type="entry name" value="Methyltransf_25"/>
    <property type="match status" value="1"/>
</dbReference>
<dbReference type="SUPFAM" id="SSF53335">
    <property type="entry name" value="S-adenosyl-L-methionine-dependent methyltransferases"/>
    <property type="match status" value="1"/>
</dbReference>
<accession>A6U707</accession>
<feature type="chain" id="PRO_1000056583" description="Trans-aconitate 2-methyltransferase">
    <location>
        <begin position="1"/>
        <end position="257"/>
    </location>
</feature>
<reference key="1">
    <citation type="submission" date="2007-06" db="EMBL/GenBank/DDBJ databases">
        <title>Complete sequence of Sinorhizobium medicae WSM419 chromosome.</title>
        <authorList>
            <consortium name="US DOE Joint Genome Institute"/>
            <person name="Copeland A."/>
            <person name="Lucas S."/>
            <person name="Lapidus A."/>
            <person name="Barry K."/>
            <person name="Glavina del Rio T."/>
            <person name="Dalin E."/>
            <person name="Tice H."/>
            <person name="Pitluck S."/>
            <person name="Chain P."/>
            <person name="Malfatti S."/>
            <person name="Shin M."/>
            <person name="Vergez L."/>
            <person name="Schmutz J."/>
            <person name="Larimer F."/>
            <person name="Land M."/>
            <person name="Hauser L."/>
            <person name="Kyrpides N."/>
            <person name="Mikhailova N."/>
            <person name="Reeve W.G."/>
            <person name="Richardson P."/>
        </authorList>
    </citation>
    <scope>NUCLEOTIDE SEQUENCE [LARGE SCALE GENOMIC DNA]</scope>
    <source>
        <strain>WSM419</strain>
    </source>
</reference>
<organism>
    <name type="scientific">Sinorhizobium medicae (strain WSM419)</name>
    <name type="common">Ensifer medicae</name>
    <dbReference type="NCBI Taxonomy" id="366394"/>
    <lineage>
        <taxon>Bacteria</taxon>
        <taxon>Pseudomonadati</taxon>
        <taxon>Pseudomonadota</taxon>
        <taxon>Alphaproteobacteria</taxon>
        <taxon>Hyphomicrobiales</taxon>
        <taxon>Rhizobiaceae</taxon>
        <taxon>Sinorhizobium/Ensifer group</taxon>
        <taxon>Sinorhizobium</taxon>
    </lineage>
</organism>
<gene>
    <name evidence="1" type="primary">tam</name>
    <name type="ordered locus">Smed_0581</name>
</gene>